<protein>
    <recommendedName>
        <fullName>Sperm protamine P1</fullName>
    </recommendedName>
</protein>
<keyword id="KW-0158">Chromosome</keyword>
<keyword id="KW-0217">Developmental protein</keyword>
<keyword id="KW-0221">Differentiation</keyword>
<keyword id="KW-0226">DNA condensation</keyword>
<keyword id="KW-0238">DNA-binding</keyword>
<keyword id="KW-0544">Nucleosome core</keyword>
<keyword id="KW-0539">Nucleus</keyword>
<keyword id="KW-0744">Spermatogenesis</keyword>
<proteinExistence type="evidence at transcript level"/>
<reference key="1">
    <citation type="journal article" date="1997" name="Mol. Phylogenet. Evol.">
        <title>A multigene assessment of phylogenetic relationships within the dasyurid marsupial subfamily Sminthopsinae.</title>
        <authorList>
            <person name="Krajewski C."/>
            <person name="Blacket M."/>
            <person name="Buckley L."/>
            <person name="Westerman M."/>
        </authorList>
    </citation>
    <scope>NUCLEOTIDE SEQUENCE [GENOMIC DNA]</scope>
</reference>
<accession>Q71VP7</accession>
<dbReference type="EMBL" id="AF001588">
    <property type="protein sequence ID" value="AAB91378.1"/>
    <property type="molecule type" value="Genomic_DNA"/>
</dbReference>
<dbReference type="GO" id="GO:0000786">
    <property type="term" value="C:nucleosome"/>
    <property type="evidence" value="ECO:0007669"/>
    <property type="project" value="UniProtKB-KW"/>
</dbReference>
<dbReference type="GO" id="GO:0005634">
    <property type="term" value="C:nucleus"/>
    <property type="evidence" value="ECO:0007669"/>
    <property type="project" value="UniProtKB-SubCell"/>
</dbReference>
<dbReference type="GO" id="GO:0003677">
    <property type="term" value="F:DNA binding"/>
    <property type="evidence" value="ECO:0007669"/>
    <property type="project" value="UniProtKB-KW"/>
</dbReference>
<dbReference type="GO" id="GO:0030261">
    <property type="term" value="P:chromosome condensation"/>
    <property type="evidence" value="ECO:0007669"/>
    <property type="project" value="UniProtKB-KW"/>
</dbReference>
<dbReference type="GO" id="GO:0035092">
    <property type="term" value="P:sperm DNA condensation"/>
    <property type="evidence" value="ECO:0007669"/>
    <property type="project" value="InterPro"/>
</dbReference>
<dbReference type="InterPro" id="IPR000221">
    <property type="entry name" value="Protamine_P1"/>
</dbReference>
<dbReference type="PROSITE" id="PS00048">
    <property type="entry name" value="PROTAMINE_P1"/>
    <property type="match status" value="1"/>
</dbReference>
<feature type="chain" id="PRO_0000191511" description="Sperm protamine P1">
    <location>
        <begin position="1"/>
        <end position="63"/>
    </location>
</feature>
<feature type="region of interest" description="Disordered" evidence="2">
    <location>
        <begin position="1"/>
        <end position="63"/>
    </location>
</feature>
<comment type="function">
    <text evidence="1">Protamines substitute for histones in the chromatin of sperm during the haploid phase of spermatogenesis. They compact sperm DNA into a highly condensed, stable and inactive complex (By similarity).</text>
</comment>
<comment type="subcellular location">
    <subcellularLocation>
        <location evidence="1">Nucleus</location>
    </subcellularLocation>
    <subcellularLocation>
        <location evidence="1">Chromosome</location>
    </subcellularLocation>
</comment>
<comment type="tissue specificity">
    <text>Testis.</text>
</comment>
<comment type="similarity">
    <text evidence="3">Belongs to the protamine P1 family.</text>
</comment>
<sequence length="63" mass="8697">MARYRRHSRSRSRSRYRRRRRRRSRHHNRRRTYRRSRRHSRRRRGRRRGYSRRRYSRRGRRRY</sequence>
<gene>
    <name type="primary">PRM1</name>
</gene>
<organism>
    <name type="scientific">Ningaui ridei</name>
    <name type="common">Wongai ningaui</name>
    <dbReference type="NCBI Taxonomy" id="32553"/>
    <lineage>
        <taxon>Eukaryota</taxon>
        <taxon>Metazoa</taxon>
        <taxon>Chordata</taxon>
        <taxon>Craniata</taxon>
        <taxon>Vertebrata</taxon>
        <taxon>Euteleostomi</taxon>
        <taxon>Mammalia</taxon>
        <taxon>Metatheria</taxon>
        <taxon>Dasyuromorphia</taxon>
        <taxon>Dasyuridae</taxon>
        <taxon>Ningaui</taxon>
    </lineage>
</organism>
<name>HSP1_NINRI</name>
<evidence type="ECO:0000250" key="1"/>
<evidence type="ECO:0000256" key="2">
    <source>
        <dbReference type="SAM" id="MobiDB-lite"/>
    </source>
</evidence>
<evidence type="ECO:0000305" key="3"/>